<keyword id="KW-0066">ATP synthesis</keyword>
<keyword id="KW-0067">ATP-binding</keyword>
<keyword id="KW-0997">Cell inner membrane</keyword>
<keyword id="KW-1003">Cell membrane</keyword>
<keyword id="KW-0139">CF(1)</keyword>
<keyword id="KW-0375">Hydrogen ion transport</keyword>
<keyword id="KW-0406">Ion transport</keyword>
<keyword id="KW-0472">Membrane</keyword>
<keyword id="KW-0547">Nucleotide-binding</keyword>
<keyword id="KW-1185">Reference proteome</keyword>
<keyword id="KW-1278">Translocase</keyword>
<keyword id="KW-0813">Transport</keyword>
<accession>Q8UC76</accession>
<accession>Q8U534</accession>
<evidence type="ECO:0000255" key="1">
    <source>
        <dbReference type="HAMAP-Rule" id="MF_01347"/>
    </source>
</evidence>
<feature type="chain" id="PRO_0000254198" description="ATP synthase subunit beta">
    <location>
        <begin position="1"/>
        <end position="484"/>
    </location>
</feature>
<feature type="binding site" evidence="1">
    <location>
        <begin position="162"/>
        <end position="169"/>
    </location>
    <ligand>
        <name>ATP</name>
        <dbReference type="ChEBI" id="CHEBI:30616"/>
    </ligand>
</feature>
<comment type="function">
    <text evidence="1">Produces ATP from ADP in the presence of a proton gradient across the membrane. The catalytic sites are hosted primarily by the beta subunits.</text>
</comment>
<comment type="catalytic activity">
    <reaction evidence="1">
        <text>ATP + H2O + 4 H(+)(in) = ADP + phosphate + 5 H(+)(out)</text>
        <dbReference type="Rhea" id="RHEA:57720"/>
        <dbReference type="ChEBI" id="CHEBI:15377"/>
        <dbReference type="ChEBI" id="CHEBI:15378"/>
        <dbReference type="ChEBI" id="CHEBI:30616"/>
        <dbReference type="ChEBI" id="CHEBI:43474"/>
        <dbReference type="ChEBI" id="CHEBI:456216"/>
        <dbReference type="EC" id="7.1.2.2"/>
    </reaction>
</comment>
<comment type="subunit">
    <text evidence="1">F-type ATPases have 2 components, CF(1) - the catalytic core - and CF(0) - the membrane proton channel. CF(1) has five subunits: alpha(3), beta(3), gamma(1), delta(1), epsilon(1). CF(0) has three main subunits: a(1), b(2) and c(9-12). The alpha and beta chains form an alternating ring which encloses part of the gamma chain. CF(1) is attached to CF(0) by a central stalk formed by the gamma and epsilon chains, while a peripheral stalk is formed by the delta and b chains.</text>
</comment>
<comment type="subcellular location">
    <subcellularLocation>
        <location evidence="1">Cell inner membrane</location>
        <topology evidence="1">Peripheral membrane protein</topology>
    </subcellularLocation>
</comment>
<comment type="similarity">
    <text evidence="1">Belongs to the ATPase alpha/beta chains family.</text>
</comment>
<reference key="1">
    <citation type="journal article" date="2001" name="Science">
        <title>The genome of the natural genetic engineer Agrobacterium tumefaciens C58.</title>
        <authorList>
            <person name="Wood D.W."/>
            <person name="Setubal J.C."/>
            <person name="Kaul R."/>
            <person name="Monks D.E."/>
            <person name="Kitajima J.P."/>
            <person name="Okura V.K."/>
            <person name="Zhou Y."/>
            <person name="Chen L."/>
            <person name="Wood G.E."/>
            <person name="Almeida N.F. Jr."/>
            <person name="Woo L."/>
            <person name="Chen Y."/>
            <person name="Paulsen I.T."/>
            <person name="Eisen J.A."/>
            <person name="Karp P.D."/>
            <person name="Bovee D. Sr."/>
            <person name="Chapman P."/>
            <person name="Clendenning J."/>
            <person name="Deatherage G."/>
            <person name="Gillet W."/>
            <person name="Grant C."/>
            <person name="Kutyavin T."/>
            <person name="Levy R."/>
            <person name="Li M.-J."/>
            <person name="McClelland E."/>
            <person name="Palmieri A."/>
            <person name="Raymond C."/>
            <person name="Rouse G."/>
            <person name="Saenphimmachak C."/>
            <person name="Wu Z."/>
            <person name="Romero P."/>
            <person name="Gordon D."/>
            <person name="Zhang S."/>
            <person name="Yoo H."/>
            <person name="Tao Y."/>
            <person name="Biddle P."/>
            <person name="Jung M."/>
            <person name="Krespan W."/>
            <person name="Perry M."/>
            <person name="Gordon-Kamm B."/>
            <person name="Liao L."/>
            <person name="Kim S."/>
            <person name="Hendrick C."/>
            <person name="Zhao Z.-Y."/>
            <person name="Dolan M."/>
            <person name="Chumley F."/>
            <person name="Tingey S.V."/>
            <person name="Tomb J.-F."/>
            <person name="Gordon M.P."/>
            <person name="Olson M.V."/>
            <person name="Nester E.W."/>
        </authorList>
    </citation>
    <scope>NUCLEOTIDE SEQUENCE [LARGE SCALE GENOMIC DNA]</scope>
    <source>
        <strain>C58 / ATCC 33970</strain>
    </source>
</reference>
<reference key="2">
    <citation type="journal article" date="2001" name="Science">
        <title>Genome sequence of the plant pathogen and biotechnology agent Agrobacterium tumefaciens C58.</title>
        <authorList>
            <person name="Goodner B."/>
            <person name="Hinkle G."/>
            <person name="Gattung S."/>
            <person name="Miller N."/>
            <person name="Blanchard M."/>
            <person name="Qurollo B."/>
            <person name="Goldman B.S."/>
            <person name="Cao Y."/>
            <person name="Askenazi M."/>
            <person name="Halling C."/>
            <person name="Mullin L."/>
            <person name="Houmiel K."/>
            <person name="Gordon J."/>
            <person name="Vaudin M."/>
            <person name="Iartchouk O."/>
            <person name="Epp A."/>
            <person name="Liu F."/>
            <person name="Wollam C."/>
            <person name="Allinger M."/>
            <person name="Doughty D."/>
            <person name="Scott C."/>
            <person name="Lappas C."/>
            <person name="Markelz B."/>
            <person name="Flanagan C."/>
            <person name="Crowell C."/>
            <person name="Gurson J."/>
            <person name="Lomo C."/>
            <person name="Sear C."/>
            <person name="Strub G."/>
            <person name="Cielo C."/>
            <person name="Slater S."/>
        </authorList>
    </citation>
    <scope>NUCLEOTIDE SEQUENCE [LARGE SCALE GENOMIC DNA]</scope>
    <source>
        <strain>C58 / ATCC 33970</strain>
    </source>
</reference>
<sequence length="484" mass="51433">MAKAATPKKTAAVNGAGKVTQVIGAVVDVAFEGELPPILNALETQNNGNRLVLEVAQHLGENVVRTIAMDSTEGLVRGQSVADTGAPIEVPVGLETLGRIMNVIGEPVDEAGPIVTAKKRAIHQDAPSYVEQSTEGQILVTGIKVVDLLAPYAKGGKIGLFGGAGVGKTVLIMELINNVAKAHGGYSVFAGVGERTREGNDLYHEMIESNVNKLGGGEGSKAALVYGQMNEPPGARARVALTGLTIAENFRDEGQDVLFFVDNIFRFTQAGSEVSALLGRIPSAVGYQPTLATDMGQMQERITTTNKGSITSVQAIYVPADDLTDPAPATSFAHLDATTVLSRSIAEKGIYPAVDPLDSTSRMLDPMIVGEEHYEVARKVQSTLQRYKSLQDIIAILGMDELSEEDKLTVARARKIERFLSQPFFVAEVFTGSPGKLVALEDTIKGFKGLVNGEYDSLPEAAFYMVGSMEEAIEKAKKLTAEAA</sequence>
<proteinExistence type="inferred from homology"/>
<name>ATPB_AGRFC</name>
<organism>
    <name type="scientific">Agrobacterium fabrum (strain C58 / ATCC 33970)</name>
    <name type="common">Agrobacterium tumefaciens (strain C58)</name>
    <dbReference type="NCBI Taxonomy" id="176299"/>
    <lineage>
        <taxon>Bacteria</taxon>
        <taxon>Pseudomonadati</taxon>
        <taxon>Pseudomonadota</taxon>
        <taxon>Alphaproteobacteria</taxon>
        <taxon>Hyphomicrobiales</taxon>
        <taxon>Rhizobiaceae</taxon>
        <taxon>Rhizobium/Agrobacterium group</taxon>
        <taxon>Agrobacterium</taxon>
        <taxon>Agrobacterium tumefaciens complex</taxon>
    </lineage>
</organism>
<gene>
    <name evidence="1" type="primary">atpD</name>
    <name type="ordered locus">Atu2622</name>
    <name type="ORF">AGR_C_4754</name>
</gene>
<dbReference type="EC" id="7.1.2.2" evidence="1"/>
<dbReference type="EMBL" id="AE007869">
    <property type="protein sequence ID" value="AAK88343.2"/>
    <property type="molecule type" value="Genomic_DNA"/>
</dbReference>
<dbReference type="PIR" id="AE2898">
    <property type="entry name" value="AE2898"/>
</dbReference>
<dbReference type="PIR" id="F97673">
    <property type="entry name" value="F97673"/>
</dbReference>
<dbReference type="RefSeq" id="NP_355558.2">
    <property type="nucleotide sequence ID" value="NC_003062.2"/>
</dbReference>
<dbReference type="RefSeq" id="WP_006310767.1">
    <property type="nucleotide sequence ID" value="NC_003062.2"/>
</dbReference>
<dbReference type="SMR" id="Q8UC76"/>
<dbReference type="STRING" id="176299.Atu2622"/>
<dbReference type="EnsemblBacteria" id="AAK88343">
    <property type="protein sequence ID" value="AAK88343"/>
    <property type="gene ID" value="Atu2622"/>
</dbReference>
<dbReference type="GeneID" id="1134660"/>
<dbReference type="KEGG" id="atu:Atu2622"/>
<dbReference type="PATRIC" id="fig|176299.10.peg.2625"/>
<dbReference type="eggNOG" id="COG0055">
    <property type="taxonomic scope" value="Bacteria"/>
</dbReference>
<dbReference type="HOGENOM" id="CLU_022398_0_2_5"/>
<dbReference type="OrthoDB" id="9801639at2"/>
<dbReference type="PhylomeDB" id="Q8UC76"/>
<dbReference type="BioCyc" id="AGRO:ATU2622-MONOMER"/>
<dbReference type="Proteomes" id="UP000000813">
    <property type="component" value="Chromosome circular"/>
</dbReference>
<dbReference type="GO" id="GO:0005886">
    <property type="term" value="C:plasma membrane"/>
    <property type="evidence" value="ECO:0007669"/>
    <property type="project" value="UniProtKB-SubCell"/>
</dbReference>
<dbReference type="GO" id="GO:0045259">
    <property type="term" value="C:proton-transporting ATP synthase complex"/>
    <property type="evidence" value="ECO:0007669"/>
    <property type="project" value="UniProtKB-KW"/>
</dbReference>
<dbReference type="GO" id="GO:0005524">
    <property type="term" value="F:ATP binding"/>
    <property type="evidence" value="ECO:0007669"/>
    <property type="project" value="UniProtKB-UniRule"/>
</dbReference>
<dbReference type="GO" id="GO:0016887">
    <property type="term" value="F:ATP hydrolysis activity"/>
    <property type="evidence" value="ECO:0007669"/>
    <property type="project" value="InterPro"/>
</dbReference>
<dbReference type="GO" id="GO:0046933">
    <property type="term" value="F:proton-transporting ATP synthase activity, rotational mechanism"/>
    <property type="evidence" value="ECO:0007669"/>
    <property type="project" value="UniProtKB-UniRule"/>
</dbReference>
<dbReference type="CDD" id="cd18110">
    <property type="entry name" value="ATP-synt_F1_beta_C"/>
    <property type="match status" value="1"/>
</dbReference>
<dbReference type="CDD" id="cd18115">
    <property type="entry name" value="ATP-synt_F1_beta_N"/>
    <property type="match status" value="1"/>
</dbReference>
<dbReference type="CDD" id="cd01133">
    <property type="entry name" value="F1-ATPase_beta_CD"/>
    <property type="match status" value="1"/>
</dbReference>
<dbReference type="FunFam" id="1.10.1140.10:FF:000001">
    <property type="entry name" value="ATP synthase subunit beta"/>
    <property type="match status" value="1"/>
</dbReference>
<dbReference type="FunFam" id="2.40.10.170:FF:000004">
    <property type="entry name" value="ATP synthase subunit beta"/>
    <property type="match status" value="1"/>
</dbReference>
<dbReference type="FunFam" id="3.40.50.300:FF:000026">
    <property type="entry name" value="ATP synthase subunit beta"/>
    <property type="match status" value="1"/>
</dbReference>
<dbReference type="Gene3D" id="2.40.10.170">
    <property type="match status" value="1"/>
</dbReference>
<dbReference type="Gene3D" id="1.10.1140.10">
    <property type="entry name" value="Bovine Mitochondrial F1-atpase, Atp Synthase Beta Chain, Chain D, domain 3"/>
    <property type="match status" value="1"/>
</dbReference>
<dbReference type="Gene3D" id="3.40.50.300">
    <property type="entry name" value="P-loop containing nucleotide triphosphate hydrolases"/>
    <property type="match status" value="1"/>
</dbReference>
<dbReference type="HAMAP" id="MF_01347">
    <property type="entry name" value="ATP_synth_beta_bact"/>
    <property type="match status" value="1"/>
</dbReference>
<dbReference type="InterPro" id="IPR003593">
    <property type="entry name" value="AAA+_ATPase"/>
</dbReference>
<dbReference type="InterPro" id="IPR055190">
    <property type="entry name" value="ATP-synt_VA_C"/>
</dbReference>
<dbReference type="InterPro" id="IPR005722">
    <property type="entry name" value="ATP_synth_F1_bsu"/>
</dbReference>
<dbReference type="InterPro" id="IPR020003">
    <property type="entry name" value="ATPase_a/bsu_AS"/>
</dbReference>
<dbReference type="InterPro" id="IPR050053">
    <property type="entry name" value="ATPase_alpha/beta_chains"/>
</dbReference>
<dbReference type="InterPro" id="IPR004100">
    <property type="entry name" value="ATPase_F1/V1/A1_a/bsu_N"/>
</dbReference>
<dbReference type="InterPro" id="IPR036121">
    <property type="entry name" value="ATPase_F1/V1/A1_a/bsu_N_sf"/>
</dbReference>
<dbReference type="InterPro" id="IPR000194">
    <property type="entry name" value="ATPase_F1/V1/A1_a/bsu_nucl-bd"/>
</dbReference>
<dbReference type="InterPro" id="IPR024034">
    <property type="entry name" value="ATPase_F1/V1_b/a_C"/>
</dbReference>
<dbReference type="InterPro" id="IPR027417">
    <property type="entry name" value="P-loop_NTPase"/>
</dbReference>
<dbReference type="NCBIfam" id="TIGR01039">
    <property type="entry name" value="atpD"/>
    <property type="match status" value="1"/>
</dbReference>
<dbReference type="PANTHER" id="PTHR15184">
    <property type="entry name" value="ATP SYNTHASE"/>
    <property type="match status" value="1"/>
</dbReference>
<dbReference type="PANTHER" id="PTHR15184:SF71">
    <property type="entry name" value="ATP SYNTHASE SUBUNIT BETA, MITOCHONDRIAL"/>
    <property type="match status" value="1"/>
</dbReference>
<dbReference type="Pfam" id="PF00006">
    <property type="entry name" value="ATP-synt_ab"/>
    <property type="match status" value="1"/>
</dbReference>
<dbReference type="Pfam" id="PF02874">
    <property type="entry name" value="ATP-synt_ab_N"/>
    <property type="match status" value="1"/>
</dbReference>
<dbReference type="Pfam" id="PF22919">
    <property type="entry name" value="ATP-synt_VA_C"/>
    <property type="match status" value="1"/>
</dbReference>
<dbReference type="PIRSF" id="PIRSF039072">
    <property type="entry name" value="ATPase_subunit_beta"/>
    <property type="match status" value="1"/>
</dbReference>
<dbReference type="SMART" id="SM00382">
    <property type="entry name" value="AAA"/>
    <property type="match status" value="1"/>
</dbReference>
<dbReference type="SUPFAM" id="SSF47917">
    <property type="entry name" value="C-terminal domain of alpha and beta subunits of F1 ATP synthase"/>
    <property type="match status" value="1"/>
</dbReference>
<dbReference type="SUPFAM" id="SSF50615">
    <property type="entry name" value="N-terminal domain of alpha and beta subunits of F1 ATP synthase"/>
    <property type="match status" value="1"/>
</dbReference>
<dbReference type="SUPFAM" id="SSF52540">
    <property type="entry name" value="P-loop containing nucleoside triphosphate hydrolases"/>
    <property type="match status" value="1"/>
</dbReference>
<dbReference type="PROSITE" id="PS00152">
    <property type="entry name" value="ATPASE_ALPHA_BETA"/>
    <property type="match status" value="1"/>
</dbReference>
<protein>
    <recommendedName>
        <fullName evidence="1">ATP synthase subunit beta</fullName>
        <ecNumber evidence="1">7.1.2.2</ecNumber>
    </recommendedName>
    <alternativeName>
        <fullName evidence="1">ATP synthase F1 sector subunit beta</fullName>
    </alternativeName>
    <alternativeName>
        <fullName evidence="1">F-ATPase subunit beta</fullName>
    </alternativeName>
</protein>